<comment type="subcellular location">
    <subcellularLocation>
        <location evidence="1">Cell membrane</location>
        <topology evidence="1">Multi-pass membrane protein</topology>
    </subcellularLocation>
</comment>
<comment type="similarity">
    <text evidence="1">Belongs to the UPF0756 family.</text>
</comment>
<organism>
    <name type="scientific">Neisseria meningitidis serogroup C / serotype 2a (strain ATCC 700532 / DSM 15464 / FAM18)</name>
    <dbReference type="NCBI Taxonomy" id="272831"/>
    <lineage>
        <taxon>Bacteria</taxon>
        <taxon>Pseudomonadati</taxon>
        <taxon>Pseudomonadota</taxon>
        <taxon>Betaproteobacteria</taxon>
        <taxon>Neisseriales</taxon>
        <taxon>Neisseriaceae</taxon>
        <taxon>Neisseria</taxon>
    </lineage>
</organism>
<proteinExistence type="inferred from homology"/>
<name>Y1845_NEIMF</name>
<protein>
    <recommendedName>
        <fullName evidence="1">UPF0756 membrane protein NMC1845</fullName>
    </recommendedName>
</protein>
<dbReference type="EMBL" id="AM421808">
    <property type="protein sequence ID" value="CAM11011.1"/>
    <property type="molecule type" value="Genomic_DNA"/>
</dbReference>
<dbReference type="RefSeq" id="WP_002220271.1">
    <property type="nucleotide sequence ID" value="NC_008767.1"/>
</dbReference>
<dbReference type="KEGG" id="nmc:NMC1845"/>
<dbReference type="HOGENOM" id="CLU_125889_0_0_4"/>
<dbReference type="Proteomes" id="UP000002286">
    <property type="component" value="Chromosome"/>
</dbReference>
<dbReference type="GO" id="GO:0005886">
    <property type="term" value="C:plasma membrane"/>
    <property type="evidence" value="ECO:0007669"/>
    <property type="project" value="UniProtKB-SubCell"/>
</dbReference>
<dbReference type="HAMAP" id="MF_01874">
    <property type="entry name" value="UPF0756"/>
    <property type="match status" value="1"/>
</dbReference>
<dbReference type="InterPro" id="IPR007382">
    <property type="entry name" value="UPF0756_TM"/>
</dbReference>
<dbReference type="PANTHER" id="PTHR38452">
    <property type="entry name" value="UPF0756 MEMBRANE PROTEIN YEAL"/>
    <property type="match status" value="1"/>
</dbReference>
<dbReference type="PANTHER" id="PTHR38452:SF1">
    <property type="entry name" value="UPF0756 MEMBRANE PROTEIN YEAL"/>
    <property type="match status" value="1"/>
</dbReference>
<dbReference type="Pfam" id="PF04284">
    <property type="entry name" value="DUF441"/>
    <property type="match status" value="1"/>
</dbReference>
<keyword id="KW-1003">Cell membrane</keyword>
<keyword id="KW-0472">Membrane</keyword>
<keyword id="KW-0812">Transmembrane</keyword>
<keyword id="KW-1133">Transmembrane helix</keyword>
<gene>
    <name type="ordered locus">NMC1845</name>
</gene>
<evidence type="ECO:0000255" key="1">
    <source>
        <dbReference type="HAMAP-Rule" id="MF_01874"/>
    </source>
</evidence>
<accession>A1KVV6</accession>
<sequence>MNFSFVPLFLVTLILLGVVSNNNSITISATILLLMQQTALVQFVPLVEKHGLNLGIILLTIGVLSPLVSGKAQVPPVAEFLNFKMISAVFIGIFVAWLAGRGVPLMGQQPVLITGLLIGTVIGVAFMGGIPVGPLIAAGILSFVVGKG</sequence>
<feature type="chain" id="PRO_0000388912" description="UPF0756 membrane protein NMC1845">
    <location>
        <begin position="1"/>
        <end position="148"/>
    </location>
</feature>
<feature type="transmembrane region" description="Helical" evidence="1">
    <location>
        <begin position="13"/>
        <end position="35"/>
    </location>
</feature>
<feature type="transmembrane region" description="Helical" evidence="1">
    <location>
        <begin position="50"/>
        <end position="70"/>
    </location>
</feature>
<feature type="transmembrane region" description="Helical" evidence="1">
    <location>
        <begin position="80"/>
        <end position="100"/>
    </location>
</feature>
<feature type="transmembrane region" description="Helical" evidence="1">
    <location>
        <begin position="121"/>
        <end position="141"/>
    </location>
</feature>
<reference key="1">
    <citation type="journal article" date="2007" name="PLoS Genet.">
        <title>Meningococcal genetic variation mechanisms viewed through comparative analysis of serogroup C strain FAM18.</title>
        <authorList>
            <person name="Bentley S.D."/>
            <person name="Vernikos G.S."/>
            <person name="Snyder L.A.S."/>
            <person name="Churcher C."/>
            <person name="Arrowsmith C."/>
            <person name="Chillingworth T."/>
            <person name="Cronin A."/>
            <person name="Davis P.H."/>
            <person name="Holroyd N.E."/>
            <person name="Jagels K."/>
            <person name="Maddison M."/>
            <person name="Moule S."/>
            <person name="Rabbinowitsch E."/>
            <person name="Sharp S."/>
            <person name="Unwin L."/>
            <person name="Whitehead S."/>
            <person name="Quail M.A."/>
            <person name="Achtman M."/>
            <person name="Barrell B.G."/>
            <person name="Saunders N.J."/>
            <person name="Parkhill J."/>
        </authorList>
    </citation>
    <scope>NUCLEOTIDE SEQUENCE [LARGE SCALE GENOMIC DNA]</scope>
    <source>
        <strain>ATCC 700532 / DSM 15464 / FAM18</strain>
    </source>
</reference>